<protein>
    <recommendedName>
        <fullName>Phosphoprotein</fullName>
        <shortName>Protein P</shortName>
    </recommendedName>
    <alternativeName>
        <fullName>Protein M1</fullName>
    </alternativeName>
</protein>
<keyword id="KW-0024">Alternative initiation</keyword>
<keyword id="KW-0143">Chaperone</keyword>
<keyword id="KW-1035">Host cytoplasm</keyword>
<keyword id="KW-1048">Host nucleus</keyword>
<keyword id="KW-0945">Host-virus interaction</keyword>
<keyword id="KW-1090">Inhibition of host innate immune response by virus</keyword>
<keyword id="KW-1114">Inhibition of host interferon signaling pathway by virus</keyword>
<keyword id="KW-1105">Inhibition of host STAT1 by virus</keyword>
<keyword id="KW-1106">Inhibition of host STAT2 by virus</keyword>
<keyword id="KW-0922">Interferon antiviral system evasion</keyword>
<keyword id="KW-0597">Phosphoprotein</keyword>
<keyword id="KW-1185">Reference proteome</keyword>
<keyword id="KW-0899">Viral immunoevasion</keyword>
<keyword id="KW-0693">Viral RNA replication</keyword>
<keyword id="KW-0946">Virion</keyword>
<sequence>MSKIFVNPSAIRAGMADLEMAEETVDLINRNIEDNQAHLQGEPIEVDSLPEEIGKLNINEAKPQSFENNPIDIDGRMNEDFQMKEVEDPSIQFQSYLDNIGIQIVRKMKTGERFFKIWSQTVEEIISYVGANFPNPSGKTTESKSTQTTPKKVKPEPPSAPTEKPEQLSRTSMAPETTSGPLALDWSATNDDDDVSVEAEIAHQIAESFSKKYKFPSRSSGIFLYNFEQLKMNLDDIVKEARGVPGIIRLAKEGLRLPLRCILGWVASSHSKKFQLLVGSEKLSKIMQDDLNRYMSC</sequence>
<dbReference type="EMBL" id="AF081020">
    <property type="protein sequence ID" value="AAD47897.1"/>
    <property type="molecule type" value="Genomic_RNA"/>
</dbReference>
<dbReference type="RefSeq" id="NP_478340.1">
    <property type="nucleotide sequence ID" value="NC_003243.1"/>
</dbReference>
<dbReference type="SMR" id="Q9QSP3"/>
<dbReference type="GeneID" id="926731"/>
<dbReference type="KEGG" id="vg:926731"/>
<dbReference type="Proteomes" id="UP000006934">
    <property type="component" value="Segment"/>
</dbReference>
<dbReference type="GO" id="GO:0030430">
    <property type="term" value="C:host cell cytoplasm"/>
    <property type="evidence" value="ECO:0007669"/>
    <property type="project" value="UniProtKB-SubCell"/>
</dbReference>
<dbReference type="GO" id="GO:0042025">
    <property type="term" value="C:host cell nucleus"/>
    <property type="evidence" value="ECO:0007669"/>
    <property type="project" value="UniProtKB-SubCell"/>
</dbReference>
<dbReference type="GO" id="GO:0044423">
    <property type="term" value="C:virion component"/>
    <property type="evidence" value="ECO:0007669"/>
    <property type="project" value="UniProtKB-KW"/>
</dbReference>
<dbReference type="GO" id="GO:0003968">
    <property type="term" value="F:RNA-directed RNA polymerase activity"/>
    <property type="evidence" value="ECO:0007669"/>
    <property type="project" value="InterPro"/>
</dbReference>
<dbReference type="GO" id="GO:0052170">
    <property type="term" value="P:symbiont-mediated suppression of host innate immune response"/>
    <property type="evidence" value="ECO:0007669"/>
    <property type="project" value="UniProtKB-KW"/>
</dbReference>
<dbReference type="GO" id="GO:0039563">
    <property type="term" value="P:symbiont-mediated suppression of host JAK-STAT cascade via inhibition of STAT1 activity"/>
    <property type="evidence" value="ECO:0007669"/>
    <property type="project" value="UniProtKB-KW"/>
</dbReference>
<dbReference type="GO" id="GO:0039564">
    <property type="term" value="P:symbiont-mediated suppression of host JAK-STAT cascade via inhibition of STAT2 activity"/>
    <property type="evidence" value="ECO:0007669"/>
    <property type="project" value="UniProtKB-KW"/>
</dbReference>
<dbReference type="GO" id="GO:0039502">
    <property type="term" value="P:symbiont-mediated suppression of host type I interferon-mediated signaling pathway"/>
    <property type="evidence" value="ECO:0007669"/>
    <property type="project" value="UniProtKB-KW"/>
</dbReference>
<dbReference type="GO" id="GO:0019083">
    <property type="term" value="P:viral transcription"/>
    <property type="evidence" value="ECO:0007669"/>
    <property type="project" value="InterPro"/>
</dbReference>
<dbReference type="CDD" id="cd21032">
    <property type="entry name" value="RABV_P-protein-C_like"/>
    <property type="match status" value="1"/>
</dbReference>
<dbReference type="Gene3D" id="6.10.140.1560">
    <property type="match status" value="1"/>
</dbReference>
<dbReference type="Gene3D" id="1.20.120.820">
    <property type="entry name" value="Phosphoprotein, C-terminal domain"/>
    <property type="match status" value="1"/>
</dbReference>
<dbReference type="InterPro" id="IPR004259">
    <property type="entry name" value="PP_M1-like"/>
</dbReference>
<dbReference type="InterPro" id="IPR037199">
    <property type="entry name" value="PP_M1_C"/>
</dbReference>
<dbReference type="InterPro" id="IPR049506">
    <property type="entry name" value="RABV_P-like_C"/>
</dbReference>
<dbReference type="Pfam" id="PF03012">
    <property type="entry name" value="PP_M1"/>
    <property type="match status" value="1"/>
</dbReference>
<dbReference type="SUPFAM" id="SSF118173">
    <property type="entry name" value="Phosphoprotein M1, C-terminal domain"/>
    <property type="match status" value="1"/>
</dbReference>
<evidence type="ECO:0000250" key="1"/>
<evidence type="ECO:0000256" key="2">
    <source>
        <dbReference type="SAM" id="MobiDB-lite"/>
    </source>
</evidence>
<evidence type="ECO:0000305" key="3"/>
<accession>Q9QSP3</accession>
<organism>
    <name type="scientific">Australian bat lyssavirus (isolate Bat/AUS/1996)</name>
    <name type="common">ABLV</name>
    <dbReference type="NCBI Taxonomy" id="446561"/>
    <lineage>
        <taxon>Viruses</taxon>
        <taxon>Riboviria</taxon>
        <taxon>Orthornavirae</taxon>
        <taxon>Negarnaviricota</taxon>
        <taxon>Haploviricotina</taxon>
        <taxon>Monjiviricetes</taxon>
        <taxon>Mononegavirales</taxon>
        <taxon>Rhabdoviridae</taxon>
        <taxon>Alpharhabdovirinae</taxon>
        <taxon>Lyssavirus</taxon>
        <taxon>Lyssavirus australis</taxon>
    </lineage>
</organism>
<feature type="chain" id="PRO_0000295244" description="Phosphoprotein">
    <location>
        <begin position="1"/>
        <end position="297"/>
    </location>
</feature>
<feature type="region of interest" description="Disordered" evidence="2">
    <location>
        <begin position="131"/>
        <end position="187"/>
    </location>
</feature>
<feature type="short sequence motif" description="Nuclear export signal" evidence="1">
    <location>
        <begin position="49"/>
        <end position="58"/>
    </location>
</feature>
<feature type="short sequence motif" description="Nuclear localization signal" evidence="1">
    <location>
        <begin position="211"/>
        <end position="214"/>
    </location>
</feature>
<feature type="compositionally biased region" description="Polar residues" evidence="2">
    <location>
        <begin position="134"/>
        <end position="150"/>
    </location>
</feature>
<feature type="compositionally biased region" description="Polar residues" evidence="2">
    <location>
        <begin position="168"/>
        <end position="180"/>
    </location>
</feature>
<feature type="modified residue" description="Phosphoserine; by host PKC" evidence="1">
    <location>
        <position position="210"/>
    </location>
</feature>
<feature type="modified residue" description="Phosphoserine; by host PKC" evidence="1">
    <location>
        <position position="271"/>
    </location>
</feature>
<feature type="splice variant" id="VSP_026883" description="In isoform P5." evidence="3">
    <location>
        <begin position="1"/>
        <end position="82"/>
    </location>
</feature>
<feature type="splice variant" id="VSP_026884" description="In isoform P2." evidence="3">
    <location>
        <begin position="1"/>
        <end position="19"/>
    </location>
</feature>
<name>PHOSP_ABLVB</name>
<reference key="1">
    <citation type="journal article" date="2002" name="Virus Res.">
        <title>Characterisation of an Australian bat lyssavirus variant isolated from an insectivorous bat.</title>
        <authorList>
            <person name="Gould A.R."/>
            <person name="Kattenbelt J.A."/>
            <person name="Gumley S.G."/>
            <person name="Lunt R.A."/>
        </authorList>
    </citation>
    <scope>NUCLEOTIDE SEQUENCE [GENOMIC RNA]</scope>
</reference>
<organismHost>
    <name type="scientific">Homo sapiens</name>
    <name type="common">Human</name>
    <dbReference type="NCBI Taxonomy" id="9606"/>
</organismHost>
<organismHost>
    <name type="scientific">Pteropus alecto</name>
    <name type="common">Black flying fox</name>
    <dbReference type="NCBI Taxonomy" id="9402"/>
</organismHost>
<organismHost>
    <name type="scientific">Pteropus conspicillatus</name>
    <name type="common">Spectacled flying fox</name>
    <dbReference type="NCBI Taxonomy" id="328804"/>
</organismHost>
<organismHost>
    <name type="scientific">Pteropus poliocephalus</name>
    <name type="common">Grey-headed flying fox</name>
    <dbReference type="NCBI Taxonomy" id="9403"/>
</organismHost>
<organismHost>
    <name type="scientific">Pteropus scapulatus</name>
    <name type="common">Little red flying fox</name>
    <dbReference type="NCBI Taxonomy" id="94117"/>
</organismHost>
<organismHost>
    <name type="scientific">Saccolaimus</name>
    <dbReference type="NCBI Taxonomy" id="446909"/>
</organismHost>
<proteinExistence type="inferred from homology"/>
<gene>
    <name type="primary">P</name>
</gene>
<comment type="function">
    <text evidence="1">Non catalytic polymerase cofactor and regulatory protein that plays a role in viral transcription and replication. Stabilizes the RNA polymerase L to the N-RNA template and binds the soluble protein N, preventing it from encapsidating non-genomic RNA. Also inhibits host IFN-alpha and IFN-beta signaling by binding and retaining phosphorylated STAT1 in the cytoplasm or by inhibiting the DNA binding of STAT1 in the nucleus (By similarity).</text>
</comment>
<comment type="subunit">
    <text evidence="1">Homotrimer when phosphorylated. This trimer is stabilized by binding to the L protein. Binds soluble protein N, and ribonucleocapsid. Interacts with host STAT1, STAT2, and PML (By similarity).</text>
</comment>
<comment type="subcellular location">
    <molecule>Phosphoprotein</molecule>
    <subcellularLocation>
        <location>Virion</location>
    </subcellularLocation>
    <subcellularLocation>
        <location evidence="1">Host cytoplasm</location>
    </subcellularLocation>
</comment>
<comment type="subcellular location">
    <molecule>Isoform P2</molecule>
    <subcellularLocation>
        <location evidence="1">Host cytoplasm</location>
    </subcellularLocation>
</comment>
<comment type="subcellular location">
    <molecule>Isoform P5</molecule>
    <subcellularLocation>
        <location evidence="1">Host nucleus</location>
    </subcellularLocation>
</comment>
<comment type="alternative products">
    <event type="alternative initiation"/>
    <isoform>
        <id>Q9QSP3-1</id>
        <name>P</name>
        <sequence type="displayed"/>
    </isoform>
    <isoform>
        <id>Q9QSP3-2</id>
        <name>P2</name>
        <sequence type="described" ref="VSP_026884"/>
    </isoform>
    <isoform>
        <id>Q9QSP3-3</id>
        <name>P5</name>
        <sequence type="described" ref="VSP_026883"/>
    </isoform>
</comment>
<comment type="PTM">
    <text evidence="1">Phosphorylated by host PKC and by an unknown kinase.</text>
</comment>
<comment type="similarity">
    <text evidence="3">Belongs to the lyssavirus protein P family.</text>
</comment>